<sequence>MDTEMMPKFSSKDEEIDYWKCLSLKYKKSCHDAQEELQEFQEGSRELEAELEAQLGQAEHRIRDLQSENQRLKSEVDILKEKLEQQYAQSYKQISMLEDDLLQTRGIKEQLHKYVRELEQANDDLERAKRATITSLEDFEQRLNQAIERNAFLESELDEKESLLVSVQRLKDEARDLRQELAVRERTSDVTRMSAPSSPTLDIDKTDSAVQASLSLPATPVGKTMEHPFIGTKALTNGCGNGSPLTPSARISALNIVGDLLRKVGALESKLAACRNFAKDQAARKNYTTGNGNLINSNATKFSHSLHTTYFDKTTMNGLDPGALSAAIASPRAVSPPGLLPLSV</sequence>
<gene>
    <name type="primary">ndel1b</name>
</gene>
<proteinExistence type="evidence at transcript level"/>
<feature type="chain" id="PRO_0000240218" description="Nuclear distribution protein nudE-like 1-B">
    <location>
        <begin position="1"/>
        <end position="344"/>
    </location>
</feature>
<feature type="coiled-coil region" evidence="2">
    <location>
        <begin position="26"/>
        <end position="189"/>
    </location>
</feature>
<comment type="function">
    <text evidence="1">Required for organization of the cellular microtubule array and microtubule anchoring at the centrosome. Positively regulates the activity of the minus-end directed microtubule motor protein dynein. May enhance dynein-mediated microtubule sliding by targeting dynein to the microtubule plus end (By similarity).</text>
</comment>
<comment type="subcellular location">
    <subcellularLocation>
        <location evidence="1">Cytoplasm</location>
        <location evidence="1">Cytoskeleton</location>
    </subcellularLocation>
    <subcellularLocation>
        <location evidence="1">Cytoplasm</location>
        <location evidence="1">Cytoskeleton</location>
        <location evidence="1">Microtubule organizing center</location>
        <location evidence="1">Centrosome</location>
    </subcellularLocation>
    <subcellularLocation>
        <location evidence="1">Cytoplasm</location>
        <location evidence="1">Cytoskeleton</location>
        <location evidence="1">Spindle</location>
    </subcellularLocation>
    <text evidence="1">Localizes to the interphase centrosome and the mitotic spindle.</text>
</comment>
<comment type="PTM">
    <text evidence="1">Phosphorylated in mitosis.</text>
</comment>
<comment type="similarity">
    <text evidence="3">Belongs to the nudE family.</text>
</comment>
<evidence type="ECO:0000250" key="1"/>
<evidence type="ECO:0000255" key="2"/>
<evidence type="ECO:0000305" key="3"/>
<dbReference type="EMBL" id="BC044386">
    <property type="protein sequence ID" value="AAH44386.2"/>
    <property type="molecule type" value="mRNA"/>
</dbReference>
<dbReference type="RefSeq" id="NP_958464.1">
    <property type="nucleotide sequence ID" value="NM_201307.2"/>
</dbReference>
<dbReference type="SMR" id="Q803Q2"/>
<dbReference type="FunCoup" id="Q803Q2">
    <property type="interactions" value="1611"/>
</dbReference>
<dbReference type="STRING" id="7955.ENSDARP00000140064"/>
<dbReference type="PaxDb" id="7955-ENSDARP00000055681"/>
<dbReference type="Ensembl" id="ENSDART00000169923">
    <property type="protein sequence ID" value="ENSDARP00000140064"/>
    <property type="gene ID" value="ENSDARG00000104225"/>
</dbReference>
<dbReference type="Ensembl" id="ENSDART00000189027">
    <property type="protein sequence ID" value="ENSDARP00000148946"/>
    <property type="gene ID" value="ENSDARG00000104225"/>
</dbReference>
<dbReference type="Ensembl" id="ENSDART00000190073">
    <property type="protein sequence ID" value="ENSDARP00000152129"/>
    <property type="gene ID" value="ENSDARG00000115289"/>
</dbReference>
<dbReference type="GeneID" id="333957"/>
<dbReference type="KEGG" id="dre:333957"/>
<dbReference type="AGR" id="ZFIN:ZDB-GENE-030131-5889"/>
<dbReference type="CTD" id="333957"/>
<dbReference type="ZFIN" id="ZDB-GENE-030131-5889">
    <property type="gene designation" value="ndel1b"/>
</dbReference>
<dbReference type="eggNOG" id="KOG1853">
    <property type="taxonomic scope" value="Eukaryota"/>
</dbReference>
<dbReference type="HOGENOM" id="CLU_057872_0_0_1"/>
<dbReference type="InParanoid" id="Q803Q2"/>
<dbReference type="OMA" id="KTYREHA"/>
<dbReference type="OrthoDB" id="5877028at2759"/>
<dbReference type="PhylomeDB" id="Q803Q2"/>
<dbReference type="TreeFam" id="TF325693"/>
<dbReference type="PRO" id="PR:Q803Q2"/>
<dbReference type="Proteomes" id="UP000000437">
    <property type="component" value="Alternate scaffold 3"/>
</dbReference>
<dbReference type="Proteomes" id="UP000000437">
    <property type="component" value="Chromosome 3"/>
</dbReference>
<dbReference type="Bgee" id="ENSDARG00000104225">
    <property type="expression patterns" value="Expressed in cleaving embryo and 27 other cell types or tissues"/>
</dbReference>
<dbReference type="ExpressionAtlas" id="Q803Q2">
    <property type="expression patterns" value="baseline and differential"/>
</dbReference>
<dbReference type="GO" id="GO:0005813">
    <property type="term" value="C:centrosome"/>
    <property type="evidence" value="ECO:0000318"/>
    <property type="project" value="GO_Central"/>
</dbReference>
<dbReference type="GO" id="GO:0005737">
    <property type="term" value="C:cytoplasm"/>
    <property type="evidence" value="ECO:0007669"/>
    <property type="project" value="UniProtKB-KW"/>
</dbReference>
<dbReference type="GO" id="GO:0005871">
    <property type="term" value="C:kinesin complex"/>
    <property type="evidence" value="ECO:0000318"/>
    <property type="project" value="GO_Central"/>
</dbReference>
<dbReference type="GO" id="GO:0000776">
    <property type="term" value="C:kinetochore"/>
    <property type="evidence" value="ECO:0000318"/>
    <property type="project" value="GO_Central"/>
</dbReference>
<dbReference type="GO" id="GO:0005874">
    <property type="term" value="C:microtubule"/>
    <property type="evidence" value="ECO:0007669"/>
    <property type="project" value="UniProtKB-KW"/>
</dbReference>
<dbReference type="GO" id="GO:0005819">
    <property type="term" value="C:spindle"/>
    <property type="evidence" value="ECO:0007669"/>
    <property type="project" value="UniProtKB-SubCell"/>
</dbReference>
<dbReference type="GO" id="GO:0008017">
    <property type="term" value="F:microtubule binding"/>
    <property type="evidence" value="ECO:0000318"/>
    <property type="project" value="GO_Central"/>
</dbReference>
<dbReference type="GO" id="GO:0016477">
    <property type="term" value="P:cell migration"/>
    <property type="evidence" value="ECO:0000318"/>
    <property type="project" value="GO_Central"/>
</dbReference>
<dbReference type="GO" id="GO:0051642">
    <property type="term" value="P:centrosome localization"/>
    <property type="evidence" value="ECO:0000318"/>
    <property type="project" value="GO_Central"/>
</dbReference>
<dbReference type="GO" id="GO:0007059">
    <property type="term" value="P:chromosome segregation"/>
    <property type="evidence" value="ECO:0000318"/>
    <property type="project" value="GO_Central"/>
</dbReference>
<dbReference type="GO" id="GO:0051303">
    <property type="term" value="P:establishment of chromosome localization"/>
    <property type="evidence" value="ECO:0000318"/>
    <property type="project" value="GO_Central"/>
</dbReference>
<dbReference type="GO" id="GO:0000132">
    <property type="term" value="P:establishment of mitotic spindle orientation"/>
    <property type="evidence" value="ECO:0000318"/>
    <property type="project" value="GO_Central"/>
</dbReference>
<dbReference type="GO" id="GO:0007020">
    <property type="term" value="P:microtubule nucleation"/>
    <property type="evidence" value="ECO:0000318"/>
    <property type="project" value="GO_Central"/>
</dbReference>
<dbReference type="GO" id="GO:0007100">
    <property type="term" value="P:mitotic centrosome separation"/>
    <property type="evidence" value="ECO:0000318"/>
    <property type="project" value="GO_Central"/>
</dbReference>
<dbReference type="GO" id="GO:0010975">
    <property type="term" value="P:regulation of neuron projection development"/>
    <property type="evidence" value="ECO:0000318"/>
    <property type="project" value="GO_Central"/>
</dbReference>
<dbReference type="GO" id="GO:0047496">
    <property type="term" value="P:vesicle transport along microtubule"/>
    <property type="evidence" value="ECO:0000318"/>
    <property type="project" value="GO_Central"/>
</dbReference>
<dbReference type="Gene3D" id="6.10.250.1080">
    <property type="match status" value="1"/>
</dbReference>
<dbReference type="InterPro" id="IPR033494">
    <property type="entry name" value="NUDE"/>
</dbReference>
<dbReference type="InterPro" id="IPR006964">
    <property type="entry name" value="NUDE_dom"/>
</dbReference>
<dbReference type="PANTHER" id="PTHR10921">
    <property type="entry name" value="NUCLEAR DISTRIBUTION PROTEIN NUDE HOMOLOG 1"/>
    <property type="match status" value="1"/>
</dbReference>
<dbReference type="PANTHER" id="PTHR10921:SF0">
    <property type="entry name" value="NUCLEAR DISTRIBUTION PROTEIN NUDE-LIKE 1"/>
    <property type="match status" value="1"/>
</dbReference>
<dbReference type="Pfam" id="PF04880">
    <property type="entry name" value="NUDE_C"/>
    <property type="match status" value="1"/>
</dbReference>
<reference key="1">
    <citation type="submission" date="2003-01" db="EMBL/GenBank/DDBJ databases">
        <authorList>
            <consortium name="NIH - Zebrafish Gene Collection (ZGC) project"/>
        </authorList>
    </citation>
    <scope>NUCLEOTIDE SEQUENCE [LARGE SCALE MRNA]</scope>
    <source>
        <strain>AB</strain>
    </source>
</reference>
<accession>Q803Q2</accession>
<keyword id="KW-0175">Coiled coil</keyword>
<keyword id="KW-0963">Cytoplasm</keyword>
<keyword id="KW-0206">Cytoskeleton</keyword>
<keyword id="KW-0493">Microtubule</keyword>
<keyword id="KW-0597">Phosphoprotein</keyword>
<keyword id="KW-1185">Reference proteome</keyword>
<keyword id="KW-0813">Transport</keyword>
<protein>
    <recommendedName>
        <fullName>Nuclear distribution protein nudE-like 1-B</fullName>
    </recommendedName>
</protein>
<organism>
    <name type="scientific">Danio rerio</name>
    <name type="common">Zebrafish</name>
    <name type="synonym">Brachydanio rerio</name>
    <dbReference type="NCBI Taxonomy" id="7955"/>
    <lineage>
        <taxon>Eukaryota</taxon>
        <taxon>Metazoa</taxon>
        <taxon>Chordata</taxon>
        <taxon>Craniata</taxon>
        <taxon>Vertebrata</taxon>
        <taxon>Euteleostomi</taxon>
        <taxon>Actinopterygii</taxon>
        <taxon>Neopterygii</taxon>
        <taxon>Teleostei</taxon>
        <taxon>Ostariophysi</taxon>
        <taxon>Cypriniformes</taxon>
        <taxon>Danionidae</taxon>
        <taxon>Danioninae</taxon>
        <taxon>Danio</taxon>
    </lineage>
</organism>
<name>NDL1B_DANRE</name>